<proteinExistence type="predicted"/>
<organism>
    <name type="scientific">Escherichia coli (strain K12)</name>
    <dbReference type="NCBI Taxonomy" id="83333"/>
    <lineage>
        <taxon>Bacteria</taxon>
        <taxon>Pseudomonadati</taxon>
        <taxon>Pseudomonadota</taxon>
        <taxon>Gammaproteobacteria</taxon>
        <taxon>Enterobacterales</taxon>
        <taxon>Enterobacteriaceae</taxon>
        <taxon>Escherichia</taxon>
    </lineage>
</organism>
<name>RTCR_ECOLI</name>
<reference key="1">
    <citation type="journal article" date="1997" name="Science">
        <title>The complete genome sequence of Escherichia coli K-12.</title>
        <authorList>
            <person name="Blattner F.R."/>
            <person name="Plunkett G. III"/>
            <person name="Bloch C.A."/>
            <person name="Perna N.T."/>
            <person name="Burland V."/>
            <person name="Riley M."/>
            <person name="Collado-Vides J."/>
            <person name="Glasner J.D."/>
            <person name="Rode C.K."/>
            <person name="Mayhew G.F."/>
            <person name="Gregor J."/>
            <person name="Davis N.W."/>
            <person name="Kirkpatrick H.A."/>
            <person name="Goeden M.A."/>
            <person name="Rose D.J."/>
            <person name="Mau B."/>
            <person name="Shao Y."/>
        </authorList>
    </citation>
    <scope>NUCLEOTIDE SEQUENCE [LARGE SCALE GENOMIC DNA]</scope>
    <source>
        <strain>K12 / MG1655 / ATCC 47076</strain>
    </source>
</reference>
<reference key="2">
    <citation type="journal article" date="2006" name="Mol. Syst. Biol.">
        <title>Highly accurate genome sequences of Escherichia coli K-12 strains MG1655 and W3110.</title>
        <authorList>
            <person name="Hayashi K."/>
            <person name="Morooka N."/>
            <person name="Yamamoto Y."/>
            <person name="Fujita K."/>
            <person name="Isono K."/>
            <person name="Choi S."/>
            <person name="Ohtsubo E."/>
            <person name="Baba T."/>
            <person name="Wanner B.L."/>
            <person name="Mori H."/>
            <person name="Horiuchi T."/>
        </authorList>
    </citation>
    <scope>NUCLEOTIDE SEQUENCE [LARGE SCALE GENOMIC DNA]</scope>
    <source>
        <strain>K12 / W3110 / ATCC 27325 / DSM 5911</strain>
    </source>
</reference>
<reference key="3">
    <citation type="journal article" date="1988" name="Nucleic Acids Res.">
        <title>Nucleotide sequence of the glpR gene encoding the repressor for the glycerol-3-phosphate regulon of Escherichia coli K12.</title>
        <authorList>
            <person name="Choi Y.-L."/>
            <person name="Kawase S."/>
            <person name="Nishida T."/>
            <person name="Sakai H."/>
            <person name="Komano T."/>
            <person name="Kawamukai M."/>
            <person name="Utsumi R."/>
            <person name="Kohara Y."/>
            <person name="Akiyama K."/>
        </authorList>
    </citation>
    <scope>NUCLEOTIDE SEQUENCE [GENOMIC DNA] OF 343-532</scope>
    <source>
        <strain>K12</strain>
    </source>
</reference>
<reference key="4">
    <citation type="submission" date="1992-07" db="EMBL/GenBank/DDBJ databases">
        <authorList>
            <person name="Ye S."/>
            <person name="Larson T.J."/>
        </authorList>
    </citation>
    <scope>NUCLEOTIDE SEQUENCE [GENOMIC DNA] OF 346-532</scope>
    <source>
        <strain>K12</strain>
    </source>
</reference>
<reference key="5">
    <citation type="journal article" date="1994" name="Nucleic Acids Res.">
        <title>Intrinsic and extrinsic approaches for detecting genes in a bacterial genome.</title>
        <authorList>
            <person name="Borodovsky M."/>
            <person name="Rudd K.E."/>
            <person name="Koonin E.V."/>
        </authorList>
    </citation>
    <scope>IDENTIFICATION</scope>
</reference>
<reference key="6">
    <citation type="journal article" date="1994" name="Nat. Genet.">
        <title>Large scale bacterial gene discovery by similarity search.</title>
        <authorList>
            <person name="Robison K."/>
            <person name="Gilbert W."/>
            <person name="Church G.M."/>
        </authorList>
    </citation>
    <scope>IDENTIFICATION</scope>
</reference>
<reference key="7">
    <citation type="journal article" date="1998" name="J. Biol. Chem.">
        <title>Characterization of the Escherichia coli RNA 3'-terminal phosphate cyclase and its sigma54-regulated operon.</title>
        <authorList>
            <person name="Genschik P."/>
            <person name="Drabikowski K."/>
            <person name="Filipowicz W."/>
        </authorList>
    </citation>
    <scope>FUNCTION</scope>
</reference>
<gene>
    <name type="primary">rtcR</name>
    <name type="synonym">yhgB</name>
    <name type="ordered locus">b3422</name>
    <name type="ordered locus">JW3385</name>
</gene>
<dbReference type="EMBL" id="U18997">
    <property type="protein sequence ID" value="AAA58220.1"/>
    <property type="molecule type" value="Genomic_DNA"/>
</dbReference>
<dbReference type="EMBL" id="U00096">
    <property type="protein sequence ID" value="AAC76447.1"/>
    <property type="molecule type" value="Genomic_DNA"/>
</dbReference>
<dbReference type="EMBL" id="AP009048">
    <property type="protein sequence ID" value="BAE77870.1"/>
    <property type="molecule type" value="Genomic_DNA"/>
</dbReference>
<dbReference type="EMBL" id="X07520">
    <property type="status" value="NOT_ANNOTATED_CDS"/>
    <property type="molecule type" value="Genomic_DNA"/>
</dbReference>
<dbReference type="EMBL" id="M96795">
    <property type="status" value="NOT_ANNOTATED_CDS"/>
    <property type="molecule type" value="Genomic_DNA"/>
</dbReference>
<dbReference type="PIR" id="A65138">
    <property type="entry name" value="A65138"/>
</dbReference>
<dbReference type="RefSeq" id="NP_417880.1">
    <property type="nucleotide sequence ID" value="NC_000913.3"/>
</dbReference>
<dbReference type="RefSeq" id="WP_001232948.1">
    <property type="nucleotide sequence ID" value="NZ_LN832404.1"/>
</dbReference>
<dbReference type="SMR" id="P38035"/>
<dbReference type="BioGRID" id="4261191">
    <property type="interactions" value="140"/>
</dbReference>
<dbReference type="DIP" id="DIP-10812N"/>
<dbReference type="FunCoup" id="P38035">
    <property type="interactions" value="7"/>
</dbReference>
<dbReference type="IntAct" id="P38035">
    <property type="interactions" value="5"/>
</dbReference>
<dbReference type="STRING" id="511145.b3422"/>
<dbReference type="PaxDb" id="511145-b3422"/>
<dbReference type="EnsemblBacteria" id="AAC76447">
    <property type="protein sequence ID" value="AAC76447"/>
    <property type="gene ID" value="b3422"/>
</dbReference>
<dbReference type="GeneID" id="947928"/>
<dbReference type="KEGG" id="ecj:JW3385"/>
<dbReference type="KEGG" id="eco:b3422"/>
<dbReference type="KEGG" id="ecoc:C3026_18555"/>
<dbReference type="PATRIC" id="fig|1411691.4.peg.3307"/>
<dbReference type="EchoBASE" id="EB2259"/>
<dbReference type="eggNOG" id="COG4650">
    <property type="taxonomic scope" value="Bacteria"/>
</dbReference>
<dbReference type="HOGENOM" id="CLU_039506_0_0_6"/>
<dbReference type="InParanoid" id="P38035"/>
<dbReference type="OMA" id="CWFLLTE"/>
<dbReference type="OrthoDB" id="9804019at2"/>
<dbReference type="PhylomeDB" id="P38035"/>
<dbReference type="BioCyc" id="EcoCyc:EG12356-MONOMER"/>
<dbReference type="PRO" id="PR:P38035"/>
<dbReference type="Proteomes" id="UP000000625">
    <property type="component" value="Chromosome"/>
</dbReference>
<dbReference type="GO" id="GO:0032993">
    <property type="term" value="C:protein-DNA complex"/>
    <property type="evidence" value="ECO:0000318"/>
    <property type="project" value="GO_Central"/>
</dbReference>
<dbReference type="GO" id="GO:0005524">
    <property type="term" value="F:ATP binding"/>
    <property type="evidence" value="ECO:0007669"/>
    <property type="project" value="UniProtKB-KW"/>
</dbReference>
<dbReference type="GO" id="GO:0016887">
    <property type="term" value="F:ATP hydrolysis activity"/>
    <property type="evidence" value="ECO:0007669"/>
    <property type="project" value="InterPro"/>
</dbReference>
<dbReference type="GO" id="GO:0000987">
    <property type="term" value="F:cis-regulatory region sequence-specific DNA binding"/>
    <property type="evidence" value="ECO:0000318"/>
    <property type="project" value="GO_Central"/>
</dbReference>
<dbReference type="GO" id="GO:0001216">
    <property type="term" value="F:DNA-binding transcription activator activity"/>
    <property type="evidence" value="ECO:0000318"/>
    <property type="project" value="GO_Central"/>
</dbReference>
<dbReference type="GO" id="GO:0003700">
    <property type="term" value="F:DNA-binding transcription factor activity"/>
    <property type="evidence" value="ECO:0000250"/>
    <property type="project" value="EcoCyc"/>
</dbReference>
<dbReference type="GO" id="GO:0000160">
    <property type="term" value="P:phosphorelay signal transduction system"/>
    <property type="evidence" value="ECO:0007669"/>
    <property type="project" value="UniProtKB-KW"/>
</dbReference>
<dbReference type="GO" id="GO:0045893">
    <property type="term" value="P:positive regulation of DNA-templated transcription"/>
    <property type="evidence" value="ECO:0000314"/>
    <property type="project" value="EcoCyc"/>
</dbReference>
<dbReference type="CDD" id="cd00009">
    <property type="entry name" value="AAA"/>
    <property type="match status" value="1"/>
</dbReference>
<dbReference type="FunFam" id="1.10.8.60:FF:000114">
    <property type="entry name" value="Transcriptional regulator RtcR"/>
    <property type="match status" value="1"/>
</dbReference>
<dbReference type="FunFam" id="3.40.50.300:FF:001653">
    <property type="entry name" value="Transcriptional regulator RtcR"/>
    <property type="match status" value="1"/>
</dbReference>
<dbReference type="Gene3D" id="1.10.8.60">
    <property type="match status" value="1"/>
</dbReference>
<dbReference type="Gene3D" id="3.40.50.300">
    <property type="entry name" value="P-loop containing nucleotide triphosphate hydrolases"/>
    <property type="match status" value="1"/>
</dbReference>
<dbReference type="InterPro" id="IPR003593">
    <property type="entry name" value="AAA+_ATPase"/>
</dbReference>
<dbReference type="InterPro" id="IPR027417">
    <property type="entry name" value="P-loop_NTPase"/>
</dbReference>
<dbReference type="InterPro" id="IPR009715">
    <property type="entry name" value="RtcR"/>
</dbReference>
<dbReference type="InterPro" id="IPR017183">
    <property type="entry name" value="Sigma54_dep_tscrpt_act_RtcR"/>
</dbReference>
<dbReference type="InterPro" id="IPR002078">
    <property type="entry name" value="Sigma_54_int"/>
</dbReference>
<dbReference type="InterPro" id="IPR025943">
    <property type="entry name" value="Sigma_54_int_dom_ATP-bd_2"/>
</dbReference>
<dbReference type="NCBIfam" id="NF038308">
    <property type="entry name" value="RNA_repair_RtcR"/>
    <property type="match status" value="1"/>
</dbReference>
<dbReference type="PANTHER" id="PTHR32071">
    <property type="entry name" value="TRANSCRIPTIONAL REGULATORY PROTEIN"/>
    <property type="match status" value="1"/>
</dbReference>
<dbReference type="PANTHER" id="PTHR32071:SF14">
    <property type="entry name" value="TRANSCRIPTIONAL REGULATORY PROTEIN RTCR"/>
    <property type="match status" value="1"/>
</dbReference>
<dbReference type="Pfam" id="PF06956">
    <property type="entry name" value="RtcR"/>
    <property type="match status" value="1"/>
</dbReference>
<dbReference type="Pfam" id="PF00158">
    <property type="entry name" value="Sigma54_activat"/>
    <property type="match status" value="1"/>
</dbReference>
<dbReference type="PIRSF" id="PIRSF037354">
    <property type="entry name" value="Txn_actvtr_RtcR"/>
    <property type="match status" value="1"/>
</dbReference>
<dbReference type="SMART" id="SM00382">
    <property type="entry name" value="AAA"/>
    <property type="match status" value="1"/>
</dbReference>
<dbReference type="SUPFAM" id="SSF52540">
    <property type="entry name" value="P-loop containing nucleoside triphosphate hydrolases"/>
    <property type="match status" value="1"/>
</dbReference>
<dbReference type="PROSITE" id="PS00676">
    <property type="entry name" value="SIGMA54_INTERACT_2"/>
    <property type="match status" value="1"/>
</dbReference>
<dbReference type="PROSITE" id="PS50045">
    <property type="entry name" value="SIGMA54_INTERACT_4"/>
    <property type="match status" value="1"/>
</dbReference>
<accession>P38035</accession>
<accession>Q2M786</accession>
<sequence>MRKTVAFGFVGTVLDYAGRGSQRWSKWRPTLCLCQQESLVIDRLELLHDARSRSLFETLKRDIASVSPETEVVSVEIELHNPWDFEEVYACLHDFARGYEFQPEKEDYLIHITTGTHVAQICWFLLAEARYLPARLIQSSPPRKKEQPRGPGEVTIIDLDLSRYNAIASRFAEERQQTLDFLKSGIATRNPHFNRMIEQIEKVAIKSRAPILLNGPTGAGKSFLARRILELKQARHQFSGAFVEVNCATLRGDTAMSTLFGHVKGAFTGARESREGLLRSANGGMLFLDEIGELGADEQAMLLKAIEEKTFYPFGSDRQVSSDFQLIAGTVRDLRQLVAEGKFREDLYARINLWTFTLPGLRQRQEDIEPNLDYEVERHASLTGDSVRFNTEARRAWLAFATSPQATWRGNFRELSASVTRMATFATSGRITLDVVEDEINRLRYNWQESRPSALTALLGAEAENIDLFDRMQLEHVIAICRQAKSLSAAGRQLFDVSRQGKASVNDADRLRKYLARFGLTWEAVQDQHSSS</sequence>
<comment type="function">
    <text evidence="3">Transcriptional repressor of the rtcAB genes. Interacts with sigma-54.</text>
</comment>
<comment type="sequence caution" evidence="4">
    <conflict type="erroneous termination">
        <sequence resource="EMBL" id="X07520"/>
    </conflict>
    <text>Truncated C-terminus.</text>
</comment>
<comment type="sequence caution" evidence="4">
    <conflict type="frameshift">
        <sequence resource="EMBL" id="X07520"/>
    </conflict>
</comment>
<feature type="chain" id="PRO_0000081335" description="Transcriptional regulatory protein RtcR">
    <location>
        <begin position="1"/>
        <end position="532"/>
    </location>
</feature>
<feature type="domain" description="Sigma-54 factor interaction" evidence="2">
    <location>
        <begin position="186"/>
        <end position="424"/>
    </location>
</feature>
<feature type="DNA-binding region" description="H-T-H motif" evidence="1">
    <location>
        <begin position="485"/>
        <end position="504"/>
    </location>
</feature>
<feature type="binding site" evidence="2">
    <location>
        <begin position="215"/>
        <end position="222"/>
    </location>
    <ligand>
        <name>ATP</name>
        <dbReference type="ChEBI" id="CHEBI:30616"/>
    </ligand>
</feature>
<feature type="binding site" evidence="2">
    <location>
        <begin position="281"/>
        <end position="290"/>
    </location>
    <ligand>
        <name>ATP</name>
        <dbReference type="ChEBI" id="CHEBI:30616"/>
    </ligand>
</feature>
<keyword id="KW-0067">ATP-binding</keyword>
<keyword id="KW-0238">DNA-binding</keyword>
<keyword id="KW-0547">Nucleotide-binding</keyword>
<keyword id="KW-1185">Reference proteome</keyword>
<keyword id="KW-0678">Repressor</keyword>
<keyword id="KW-0804">Transcription</keyword>
<keyword id="KW-0805">Transcription regulation</keyword>
<keyword id="KW-0902">Two-component regulatory system</keyword>
<protein>
    <recommendedName>
        <fullName>Transcriptional regulatory protein RtcR</fullName>
    </recommendedName>
</protein>
<evidence type="ECO:0000255" key="1"/>
<evidence type="ECO:0000255" key="2">
    <source>
        <dbReference type="PROSITE-ProRule" id="PRU00193"/>
    </source>
</evidence>
<evidence type="ECO:0000269" key="3">
    <source>
    </source>
</evidence>
<evidence type="ECO:0000305" key="4"/>